<evidence type="ECO:0000255" key="1">
    <source>
        <dbReference type="HAMAP-Rule" id="MF_00170"/>
    </source>
</evidence>
<gene>
    <name evidence="1" type="primary">rpiA</name>
    <name type="ordered locus">SbBS512_E3334</name>
</gene>
<reference key="1">
    <citation type="submission" date="2008-05" db="EMBL/GenBank/DDBJ databases">
        <title>Complete sequence of Shigella boydii serotype 18 strain BS512.</title>
        <authorList>
            <person name="Rasko D.A."/>
            <person name="Rosovitz M."/>
            <person name="Maurelli A.T."/>
            <person name="Myers G."/>
            <person name="Seshadri R."/>
            <person name="Cer R."/>
            <person name="Jiang L."/>
            <person name="Ravel J."/>
            <person name="Sebastian Y."/>
        </authorList>
    </citation>
    <scope>NUCLEOTIDE SEQUENCE [LARGE SCALE GENOMIC DNA]</scope>
    <source>
        <strain>CDC 3083-94 / BS512</strain>
    </source>
</reference>
<proteinExistence type="inferred from homology"/>
<name>RPIA_SHIB3</name>
<sequence length="219" mass="22860">MTQDELKKAVGWAALQYVQPGTIVGVGTGSTAAHFIDALGTMKGQIEGAVSSSDASTEKLKSLGIHVFDLNEVDSLGIYVDGADEINGHMQMIKGGGAALTREKIIASVAEKFICIADASKQVDILGKFPLPVEVIPMARSAVARQLVKLGGRPEYRQGVVTDNGNVILDVHGMEILDPIAMENAINAIPGVVTVGLFANRGADVALIGTPDGVKTIVK</sequence>
<feature type="chain" id="PRO_1000097694" description="Ribose-5-phosphate isomerase A">
    <location>
        <begin position="1"/>
        <end position="219"/>
    </location>
</feature>
<feature type="active site" description="Proton acceptor" evidence="1">
    <location>
        <position position="103"/>
    </location>
</feature>
<feature type="binding site" evidence="1">
    <location>
        <begin position="28"/>
        <end position="31"/>
    </location>
    <ligand>
        <name>substrate</name>
    </ligand>
</feature>
<feature type="binding site" evidence="1">
    <location>
        <begin position="81"/>
        <end position="84"/>
    </location>
    <ligand>
        <name>substrate</name>
    </ligand>
</feature>
<feature type="binding site" evidence="1">
    <location>
        <begin position="94"/>
        <end position="97"/>
    </location>
    <ligand>
        <name>substrate</name>
    </ligand>
</feature>
<feature type="binding site" evidence="1">
    <location>
        <position position="121"/>
    </location>
    <ligand>
        <name>substrate</name>
    </ligand>
</feature>
<organism>
    <name type="scientific">Shigella boydii serotype 18 (strain CDC 3083-94 / BS512)</name>
    <dbReference type="NCBI Taxonomy" id="344609"/>
    <lineage>
        <taxon>Bacteria</taxon>
        <taxon>Pseudomonadati</taxon>
        <taxon>Pseudomonadota</taxon>
        <taxon>Gammaproteobacteria</taxon>
        <taxon>Enterobacterales</taxon>
        <taxon>Enterobacteriaceae</taxon>
        <taxon>Shigella</taxon>
    </lineage>
</organism>
<keyword id="KW-0413">Isomerase</keyword>
<keyword id="KW-1185">Reference proteome</keyword>
<protein>
    <recommendedName>
        <fullName evidence="1">Ribose-5-phosphate isomerase A</fullName>
        <ecNumber evidence="1">5.3.1.6</ecNumber>
    </recommendedName>
    <alternativeName>
        <fullName evidence="1">Phosphoriboisomerase A</fullName>
        <shortName evidence="1">PRI</shortName>
    </alternativeName>
</protein>
<dbReference type="EC" id="5.3.1.6" evidence="1"/>
<dbReference type="EMBL" id="CP001063">
    <property type="protein sequence ID" value="ACD07236.1"/>
    <property type="molecule type" value="Genomic_DNA"/>
</dbReference>
<dbReference type="RefSeq" id="WP_000189743.1">
    <property type="nucleotide sequence ID" value="NC_010658.1"/>
</dbReference>
<dbReference type="SMR" id="B2U0T0"/>
<dbReference type="STRING" id="344609.SbBS512_E3334"/>
<dbReference type="GeneID" id="93779085"/>
<dbReference type="KEGG" id="sbc:SbBS512_E3334"/>
<dbReference type="HOGENOM" id="CLU_056590_1_1_6"/>
<dbReference type="UniPathway" id="UPA00115">
    <property type="reaction ID" value="UER00412"/>
</dbReference>
<dbReference type="Proteomes" id="UP000001030">
    <property type="component" value="Chromosome"/>
</dbReference>
<dbReference type="GO" id="GO:0005829">
    <property type="term" value="C:cytosol"/>
    <property type="evidence" value="ECO:0007669"/>
    <property type="project" value="TreeGrafter"/>
</dbReference>
<dbReference type="GO" id="GO:0004751">
    <property type="term" value="F:ribose-5-phosphate isomerase activity"/>
    <property type="evidence" value="ECO:0007669"/>
    <property type="project" value="UniProtKB-UniRule"/>
</dbReference>
<dbReference type="GO" id="GO:0006014">
    <property type="term" value="P:D-ribose metabolic process"/>
    <property type="evidence" value="ECO:0007669"/>
    <property type="project" value="TreeGrafter"/>
</dbReference>
<dbReference type="GO" id="GO:0009052">
    <property type="term" value="P:pentose-phosphate shunt, non-oxidative branch"/>
    <property type="evidence" value="ECO:0007669"/>
    <property type="project" value="UniProtKB-UniRule"/>
</dbReference>
<dbReference type="CDD" id="cd01398">
    <property type="entry name" value="RPI_A"/>
    <property type="match status" value="1"/>
</dbReference>
<dbReference type="FunFam" id="3.30.70.260:FF:000004">
    <property type="entry name" value="Ribose-5-phosphate isomerase A"/>
    <property type="match status" value="1"/>
</dbReference>
<dbReference type="FunFam" id="3.40.50.1360:FF:000001">
    <property type="entry name" value="Ribose-5-phosphate isomerase A"/>
    <property type="match status" value="1"/>
</dbReference>
<dbReference type="Gene3D" id="3.30.70.260">
    <property type="match status" value="1"/>
</dbReference>
<dbReference type="Gene3D" id="3.40.50.1360">
    <property type="match status" value="1"/>
</dbReference>
<dbReference type="HAMAP" id="MF_00170">
    <property type="entry name" value="Rib_5P_isom_A"/>
    <property type="match status" value="1"/>
</dbReference>
<dbReference type="InterPro" id="IPR037171">
    <property type="entry name" value="NagB/RpiA_transferase-like"/>
</dbReference>
<dbReference type="InterPro" id="IPR020672">
    <property type="entry name" value="Ribose5P_isomerase_typA_subgr"/>
</dbReference>
<dbReference type="InterPro" id="IPR004788">
    <property type="entry name" value="Ribose5P_isomerase_type_A"/>
</dbReference>
<dbReference type="NCBIfam" id="NF001924">
    <property type="entry name" value="PRK00702.1"/>
    <property type="match status" value="1"/>
</dbReference>
<dbReference type="NCBIfam" id="TIGR00021">
    <property type="entry name" value="rpiA"/>
    <property type="match status" value="1"/>
</dbReference>
<dbReference type="PANTHER" id="PTHR11934">
    <property type="entry name" value="RIBOSE-5-PHOSPHATE ISOMERASE"/>
    <property type="match status" value="1"/>
</dbReference>
<dbReference type="PANTHER" id="PTHR11934:SF0">
    <property type="entry name" value="RIBOSE-5-PHOSPHATE ISOMERASE"/>
    <property type="match status" value="1"/>
</dbReference>
<dbReference type="Pfam" id="PF06026">
    <property type="entry name" value="Rib_5-P_isom_A"/>
    <property type="match status" value="1"/>
</dbReference>
<dbReference type="SUPFAM" id="SSF75445">
    <property type="entry name" value="D-ribose-5-phosphate isomerase (RpiA), lid domain"/>
    <property type="match status" value="1"/>
</dbReference>
<dbReference type="SUPFAM" id="SSF100950">
    <property type="entry name" value="NagB/RpiA/CoA transferase-like"/>
    <property type="match status" value="1"/>
</dbReference>
<comment type="function">
    <text evidence="1">Catalyzes the reversible conversion of ribose-5-phosphate to ribulose 5-phosphate.</text>
</comment>
<comment type="catalytic activity">
    <reaction evidence="1">
        <text>aldehydo-D-ribose 5-phosphate = D-ribulose 5-phosphate</text>
        <dbReference type="Rhea" id="RHEA:14657"/>
        <dbReference type="ChEBI" id="CHEBI:58121"/>
        <dbReference type="ChEBI" id="CHEBI:58273"/>
        <dbReference type="EC" id="5.3.1.6"/>
    </reaction>
</comment>
<comment type="pathway">
    <text evidence="1">Carbohydrate degradation; pentose phosphate pathway; D-ribose 5-phosphate from D-ribulose 5-phosphate (non-oxidative stage): step 1/1.</text>
</comment>
<comment type="subunit">
    <text evidence="1">Homodimer.</text>
</comment>
<comment type="similarity">
    <text evidence="1">Belongs to the ribose 5-phosphate isomerase family.</text>
</comment>
<accession>B2U0T0</accession>